<sequence>MDLLLLEKTLLGSFVAVLVAILVSKLRGKRFKLPPGPLPVPVFGNWLQVGDDLNHRNLTDLAKKFGDIFLLRMGQRNLVVVSSPDLSKEVLHTQGVEFGSRTRNVVFDIFTGKGQDMVFTVYGEHWRKMRRIMTVPFFTNKVVQQYRYGWEEEAAQVVEDVKKNPEAATNGIVLRRRLQLMMYNNMYRIMFDRRFESEDDPLFNKLKALNGERSRLAQSFDYNYGDFIPILRPFLRGYLKICQEVKERRLQLFKDYFVDERKKLASTKNMSNEGLKCAIDHILDAQKKGEINEDNVLYIVENINVAAIETTLWSIEWGIAELVNHPEIQKKLRHELDTLLGPGHQITEPDTYKLPYLNAVVKETLRLRMAIPLLVPHMNLHDAKLGGFDIPAESKILVNAWWLANNPAHWKNPEEFRPERFLEEGAKVEANGNDFRYLPFGVGRRSCPGIILALPILGITLGRLVQNFELLPPPGQSKIDTSEKGGQFSLHILKHSTIVAKPRSF</sequence>
<dbReference type="EC" id="1.14.14.91" evidence="1"/>
<dbReference type="EMBL" id="D82812">
    <property type="protein sequence ID" value="BAA11576.1"/>
    <property type="molecule type" value="Genomic_DNA"/>
</dbReference>
<dbReference type="EMBL" id="D82815">
    <property type="protein sequence ID" value="BAA11579.1"/>
    <property type="molecule type" value="mRNA"/>
</dbReference>
<dbReference type="SMR" id="Q43054"/>
<dbReference type="ChEMBL" id="CHEMBL2268005"/>
<dbReference type="UniPathway" id="UPA00825">
    <property type="reaction ID" value="UER00789"/>
</dbReference>
<dbReference type="GO" id="GO:0016020">
    <property type="term" value="C:membrane"/>
    <property type="evidence" value="ECO:0007669"/>
    <property type="project" value="UniProtKB-SubCell"/>
</dbReference>
<dbReference type="GO" id="GO:0020037">
    <property type="term" value="F:heme binding"/>
    <property type="evidence" value="ECO:0007669"/>
    <property type="project" value="InterPro"/>
</dbReference>
<dbReference type="GO" id="GO:0005506">
    <property type="term" value="F:iron ion binding"/>
    <property type="evidence" value="ECO:0007669"/>
    <property type="project" value="InterPro"/>
</dbReference>
<dbReference type="GO" id="GO:0016710">
    <property type="term" value="F:trans-cinnamate 4-monooxygenase activity"/>
    <property type="evidence" value="ECO:0007669"/>
    <property type="project" value="UniProtKB-EC"/>
</dbReference>
<dbReference type="GO" id="GO:0009808">
    <property type="term" value="P:lignin metabolic process"/>
    <property type="evidence" value="ECO:0007669"/>
    <property type="project" value="TreeGrafter"/>
</dbReference>
<dbReference type="CDD" id="cd11074">
    <property type="entry name" value="CYP73"/>
    <property type="match status" value="1"/>
</dbReference>
<dbReference type="FunFam" id="1.10.630.10:FF:000013">
    <property type="entry name" value="Trans-cinnamate 4-monooxygenase"/>
    <property type="match status" value="1"/>
</dbReference>
<dbReference type="Gene3D" id="1.10.630.10">
    <property type="entry name" value="Cytochrome P450"/>
    <property type="match status" value="1"/>
</dbReference>
<dbReference type="InterPro" id="IPR001128">
    <property type="entry name" value="Cyt_P450"/>
</dbReference>
<dbReference type="InterPro" id="IPR017972">
    <property type="entry name" value="Cyt_P450_CS"/>
</dbReference>
<dbReference type="InterPro" id="IPR002401">
    <property type="entry name" value="Cyt_P450_E_grp-I"/>
</dbReference>
<dbReference type="InterPro" id="IPR036396">
    <property type="entry name" value="Cyt_P450_sf"/>
</dbReference>
<dbReference type="PANTHER" id="PTHR47948">
    <property type="entry name" value="TRANS-CINNAMATE 4-MONOOXYGENASE"/>
    <property type="match status" value="1"/>
</dbReference>
<dbReference type="PANTHER" id="PTHR47948:SF11">
    <property type="entry name" value="TRANS-CINNAMATE 4-MONOOXYGENASE"/>
    <property type="match status" value="1"/>
</dbReference>
<dbReference type="Pfam" id="PF00067">
    <property type="entry name" value="p450"/>
    <property type="match status" value="1"/>
</dbReference>
<dbReference type="PRINTS" id="PR00463">
    <property type="entry name" value="EP450I"/>
</dbReference>
<dbReference type="PRINTS" id="PR00385">
    <property type="entry name" value="P450"/>
</dbReference>
<dbReference type="SUPFAM" id="SSF48264">
    <property type="entry name" value="Cytochrome P450"/>
    <property type="match status" value="1"/>
</dbReference>
<dbReference type="PROSITE" id="PS00086">
    <property type="entry name" value="CYTOCHROME_P450"/>
    <property type="match status" value="1"/>
</dbReference>
<evidence type="ECO:0000250" key="1">
    <source>
        <dbReference type="UniProtKB" id="Q04468"/>
    </source>
</evidence>
<evidence type="ECO:0000250" key="2">
    <source>
        <dbReference type="UniProtKB" id="Q94IP1"/>
    </source>
</evidence>
<evidence type="ECO:0000255" key="3"/>
<evidence type="ECO:0000305" key="4"/>
<protein>
    <recommendedName>
        <fullName>Trans-cinnamate 4-monooxygenase</fullName>
        <ecNumber evidence="1">1.14.14.91</ecNumber>
    </recommendedName>
    <alternativeName>
        <fullName>Cinnamic acid 4-hydroxylase</fullName>
        <shortName>C4H</shortName>
        <shortName>CA4H</shortName>
    </alternativeName>
    <alternativeName>
        <fullName>Cytochrome P450 73</fullName>
    </alternativeName>
    <alternativeName>
        <fullName>Cytochrome P450C4H</fullName>
    </alternativeName>
</protein>
<name>TCMO_POPKI</name>
<feature type="chain" id="PRO_0000052251" description="Trans-cinnamate 4-monooxygenase">
    <location>
        <begin position="1"/>
        <end position="505"/>
    </location>
</feature>
<feature type="transmembrane region" description="Helical" evidence="3">
    <location>
        <begin position="3"/>
        <end position="23"/>
    </location>
</feature>
<feature type="binding site" evidence="2">
    <location>
        <begin position="213"/>
        <end position="218"/>
    </location>
    <ligand>
        <name>(E)-cinnamate</name>
        <dbReference type="ChEBI" id="CHEBI:15669"/>
    </ligand>
</feature>
<feature type="binding site" evidence="2">
    <location>
        <position position="306"/>
    </location>
    <ligand>
        <name>(E)-cinnamate</name>
        <dbReference type="ChEBI" id="CHEBI:15669"/>
    </ligand>
</feature>
<feature type="binding site" description="axial binding residue" evidence="2">
    <location>
        <position position="447"/>
    </location>
    <ligand>
        <name>heme</name>
        <dbReference type="ChEBI" id="CHEBI:30413"/>
    </ligand>
    <ligandPart>
        <name>Fe</name>
        <dbReference type="ChEBI" id="CHEBI:18248"/>
    </ligandPart>
</feature>
<keyword id="KW-0349">Heme</keyword>
<keyword id="KW-0408">Iron</keyword>
<keyword id="KW-0472">Membrane</keyword>
<keyword id="KW-0479">Metal-binding</keyword>
<keyword id="KW-0503">Monooxygenase</keyword>
<keyword id="KW-0560">Oxidoreductase</keyword>
<keyword id="KW-0812">Transmembrane</keyword>
<keyword id="KW-1133">Transmembrane helix</keyword>
<organism>
    <name type="scientific">Populus kitakamiensis</name>
    <name type="common">Aspen</name>
    <name type="synonym">Populus sieboldii x Populus grandidentata</name>
    <dbReference type="NCBI Taxonomy" id="34292"/>
    <lineage>
        <taxon>Eukaryota</taxon>
        <taxon>Viridiplantae</taxon>
        <taxon>Streptophyta</taxon>
        <taxon>Embryophyta</taxon>
        <taxon>Tracheophyta</taxon>
        <taxon>Spermatophyta</taxon>
        <taxon>Magnoliopsida</taxon>
        <taxon>eudicotyledons</taxon>
        <taxon>Gunneridae</taxon>
        <taxon>Pentapetalae</taxon>
        <taxon>rosids</taxon>
        <taxon>fabids</taxon>
        <taxon>Malpighiales</taxon>
        <taxon>Salicaceae</taxon>
        <taxon>Saliceae</taxon>
        <taxon>Populus</taxon>
    </lineage>
</organism>
<accession>Q43054</accession>
<accession>O04989</accession>
<accession>Q40906</accession>
<accession>Q43044</accession>
<comment type="function">
    <text evidence="1">Catalyzes the first oxidative step of the phenylpropanoid pathway in higher plants by transforming trans-cinnamate into p-coumarate (By similarity). The compounds formed by this pathway are essential components for lignification, pollination, and defense against ultraviolet light, predators and pathogens (By similarity).</text>
</comment>
<comment type="catalytic activity">
    <reaction evidence="1">
        <text>(E)-cinnamate + reduced [NADPH--hemoprotein reductase] + O2 = (E)-4-coumarate + oxidized [NADPH--hemoprotein reductase] + H2O + H(+)</text>
        <dbReference type="Rhea" id="RHEA:10608"/>
        <dbReference type="Rhea" id="RHEA-COMP:11964"/>
        <dbReference type="Rhea" id="RHEA-COMP:11965"/>
        <dbReference type="ChEBI" id="CHEBI:12876"/>
        <dbReference type="ChEBI" id="CHEBI:15377"/>
        <dbReference type="ChEBI" id="CHEBI:15378"/>
        <dbReference type="ChEBI" id="CHEBI:15379"/>
        <dbReference type="ChEBI" id="CHEBI:15669"/>
        <dbReference type="ChEBI" id="CHEBI:57618"/>
        <dbReference type="ChEBI" id="CHEBI:58210"/>
        <dbReference type="EC" id="1.14.14.91"/>
    </reaction>
</comment>
<comment type="cofactor">
    <cofactor evidence="2">
        <name>heme</name>
        <dbReference type="ChEBI" id="CHEBI:30413"/>
    </cofactor>
</comment>
<comment type="pathway">
    <text evidence="4">Phenylpropanoid metabolism; trans-4-coumarate biosynthesis; trans-4-coumarate from trans-cinnamate: step 1/1.</text>
</comment>
<comment type="subcellular location">
    <subcellularLocation>
        <location evidence="3">Membrane</location>
        <topology evidence="3">Single-pass membrane protein</topology>
    </subcellularLocation>
</comment>
<comment type="similarity">
    <text evidence="4">Belongs to the cytochrome P450 family.</text>
</comment>
<reference key="1">
    <citation type="journal article" date="1996" name="Biosci. Biotechnol. Biochem.">
        <title>Isolation and analysis of cinnamic acid 4-hydroxylase homologous genes from a hybrid aspen, Populus kitakamiensis.</title>
        <authorList>
            <person name="Kawai S."/>
            <person name="Mori A."/>
            <person name="Shiokawa T."/>
            <person name="Kajita S."/>
            <person name="Katayama Y."/>
            <person name="Morohoshi N."/>
        </authorList>
    </citation>
    <scope>NUCLEOTIDE SEQUENCE [GENOMIC DNA / MRNA]</scope>
    <source>
        <strain>cv. Y-63</strain>
    </source>
</reference>
<gene>
    <name type="primary">CYP73A16</name>
    <name type="synonym">CYP73</name>
</gene>
<proteinExistence type="evidence at transcript level"/>